<keyword id="KW-0378">Hydrolase</keyword>
<keyword id="KW-1185">Reference proteome</keyword>
<organism>
    <name type="scientific">Ruegeria sp. (strain TM1040)</name>
    <name type="common">Silicibacter sp.</name>
    <dbReference type="NCBI Taxonomy" id="292414"/>
    <lineage>
        <taxon>Bacteria</taxon>
        <taxon>Pseudomonadati</taxon>
        <taxon>Pseudomonadota</taxon>
        <taxon>Alphaproteobacteria</taxon>
        <taxon>Rhodobacterales</taxon>
        <taxon>Roseobacteraceae</taxon>
        <taxon>Ruegeria</taxon>
    </lineage>
</organism>
<proteinExistence type="inferred from homology"/>
<name>Y1920_RUEST</name>
<reference key="1">
    <citation type="submission" date="2006-05" db="EMBL/GenBank/DDBJ databases">
        <title>Complete sequence of chromosome of Silicibacter sp. TM1040.</title>
        <authorList>
            <consortium name="US DOE Joint Genome Institute"/>
            <person name="Copeland A."/>
            <person name="Lucas S."/>
            <person name="Lapidus A."/>
            <person name="Barry K."/>
            <person name="Detter J.C."/>
            <person name="Glavina del Rio T."/>
            <person name="Hammon N."/>
            <person name="Israni S."/>
            <person name="Dalin E."/>
            <person name="Tice H."/>
            <person name="Pitluck S."/>
            <person name="Brettin T."/>
            <person name="Bruce D."/>
            <person name="Han C."/>
            <person name="Tapia R."/>
            <person name="Goodwin L."/>
            <person name="Thompson L.S."/>
            <person name="Gilna P."/>
            <person name="Schmutz J."/>
            <person name="Larimer F."/>
            <person name="Land M."/>
            <person name="Hauser L."/>
            <person name="Kyrpides N."/>
            <person name="Kim E."/>
            <person name="Belas R."/>
            <person name="Moran M.A."/>
            <person name="Buchan A."/>
            <person name="Gonzalez J.M."/>
            <person name="Schell M.A."/>
            <person name="Sun F."/>
            <person name="Richardson P."/>
        </authorList>
    </citation>
    <scope>NUCLEOTIDE SEQUENCE [LARGE SCALE GENOMIC DNA]</scope>
    <source>
        <strain>TM1040</strain>
    </source>
</reference>
<accession>Q1GFB3</accession>
<gene>
    <name type="ordered locus">TM1040_1920</name>
</gene>
<comment type="similarity">
    <text evidence="1">Belongs to the UPF0173 family.</text>
</comment>
<protein>
    <recommendedName>
        <fullName evidence="1">UPF0173 metal-dependent hydrolase TM1040_1920</fullName>
    </recommendedName>
</protein>
<sequence length="230" mass="25240">MKLIWLGHGGFRLETGETTLLIDPWLTGNPMLEDSQHDAATQGATHILLTHAHFDHVADVLELAKHLSVPIVGQYDLMGYWGETEGVQTVGFNKGGTVTVGDTRVSMVPASHSNTFSTRDGLRTAGSEVGYMIRAEGKTLYVSGDTDIMADMDWMGDYYKPEIGILSAGGHFTMDMKAAAYAAQRYFAFKTVIPCHYRTFPLLEQSAQDLIDGLPGVNVIEPQIMKDIEL</sequence>
<dbReference type="EMBL" id="CP000377">
    <property type="protein sequence ID" value="ABF64653.1"/>
    <property type="molecule type" value="Genomic_DNA"/>
</dbReference>
<dbReference type="RefSeq" id="WP_011539246.1">
    <property type="nucleotide sequence ID" value="NC_008044.1"/>
</dbReference>
<dbReference type="SMR" id="Q1GFB3"/>
<dbReference type="STRING" id="292414.TM1040_1920"/>
<dbReference type="DNASU" id="4076871"/>
<dbReference type="KEGG" id="sit:TM1040_1920"/>
<dbReference type="eggNOG" id="COG2220">
    <property type="taxonomic scope" value="Bacteria"/>
</dbReference>
<dbReference type="HOGENOM" id="CLU_070010_4_0_5"/>
<dbReference type="OrthoDB" id="9789133at2"/>
<dbReference type="Proteomes" id="UP000000636">
    <property type="component" value="Chromosome"/>
</dbReference>
<dbReference type="GO" id="GO:0016787">
    <property type="term" value="F:hydrolase activity"/>
    <property type="evidence" value="ECO:0007669"/>
    <property type="project" value="UniProtKB-UniRule"/>
</dbReference>
<dbReference type="Gene3D" id="3.60.15.10">
    <property type="entry name" value="Ribonuclease Z/Hydroxyacylglutathione hydrolase-like"/>
    <property type="match status" value="1"/>
</dbReference>
<dbReference type="HAMAP" id="MF_00457">
    <property type="entry name" value="UPF0173"/>
    <property type="match status" value="1"/>
</dbReference>
<dbReference type="InterPro" id="IPR001279">
    <property type="entry name" value="Metallo-B-lactamas"/>
</dbReference>
<dbReference type="InterPro" id="IPR036866">
    <property type="entry name" value="RibonucZ/Hydroxyglut_hydro"/>
</dbReference>
<dbReference type="InterPro" id="IPR022877">
    <property type="entry name" value="UPF0173"/>
</dbReference>
<dbReference type="InterPro" id="IPR050114">
    <property type="entry name" value="UPF0173_UPF0282_UlaG_hydrolase"/>
</dbReference>
<dbReference type="NCBIfam" id="NF001911">
    <property type="entry name" value="PRK00685.1"/>
    <property type="match status" value="1"/>
</dbReference>
<dbReference type="PANTHER" id="PTHR43546:SF3">
    <property type="entry name" value="UPF0173 METAL-DEPENDENT HYDROLASE MJ1163"/>
    <property type="match status" value="1"/>
</dbReference>
<dbReference type="PANTHER" id="PTHR43546">
    <property type="entry name" value="UPF0173 METAL-DEPENDENT HYDROLASE MJ1163-RELATED"/>
    <property type="match status" value="1"/>
</dbReference>
<dbReference type="Pfam" id="PF12706">
    <property type="entry name" value="Lactamase_B_2"/>
    <property type="match status" value="1"/>
</dbReference>
<dbReference type="SMART" id="SM00849">
    <property type="entry name" value="Lactamase_B"/>
    <property type="match status" value="1"/>
</dbReference>
<dbReference type="SUPFAM" id="SSF56281">
    <property type="entry name" value="Metallo-hydrolase/oxidoreductase"/>
    <property type="match status" value="1"/>
</dbReference>
<evidence type="ECO:0000255" key="1">
    <source>
        <dbReference type="HAMAP-Rule" id="MF_00457"/>
    </source>
</evidence>
<feature type="chain" id="PRO_0000367216" description="UPF0173 metal-dependent hydrolase TM1040_1920">
    <location>
        <begin position="1"/>
        <end position="230"/>
    </location>
</feature>